<protein>
    <recommendedName>
        <fullName>Serine/threonine-protein kinase mos</fullName>
        <ecNumber>2.7.11.1</ecNumber>
    </recommendedName>
    <alternativeName>
        <fullName>Oocyte maturation factor mos</fullName>
    </alternativeName>
</protein>
<name>MOS_ATHNI</name>
<gene>
    <name type="primary">MOS</name>
</gene>
<proteinExistence type="inferred from homology"/>
<sequence>LLHLLGSGGFGSVYKAIYHGATVAVKKVKRCSKNHLASRQSFWAELNVARLDHNNVVRIVAASTCTPASQDSLGTIIMEYAGNCTLHHVIYGTGYLTGNNSDSLKCDHGFLSTAQAVIYSHDIVAGLMFLHSQLIVHLDLKPANIFITEHNVCKIGDFGCSQKLEDSESSGLYICHQGGTYTHRAPELL</sequence>
<dbReference type="EC" id="2.7.11.1"/>
<dbReference type="EMBL" id="AF471125">
    <property type="protein sequence ID" value="AAL79875.1"/>
    <property type="molecule type" value="Genomic_DNA"/>
</dbReference>
<dbReference type="SMR" id="Q8QHF0"/>
<dbReference type="GO" id="GO:0005524">
    <property type="term" value="F:ATP binding"/>
    <property type="evidence" value="ECO:0007669"/>
    <property type="project" value="UniProtKB-KW"/>
</dbReference>
<dbReference type="GO" id="GO:0106310">
    <property type="term" value="F:protein serine kinase activity"/>
    <property type="evidence" value="ECO:0007669"/>
    <property type="project" value="RHEA"/>
</dbReference>
<dbReference type="GO" id="GO:0004674">
    <property type="term" value="F:protein serine/threonine kinase activity"/>
    <property type="evidence" value="ECO:0007669"/>
    <property type="project" value="UniProtKB-KW"/>
</dbReference>
<dbReference type="FunFam" id="3.30.200.20:FF:000316">
    <property type="entry name" value="Proto-oncogene serine/threonine-protein kinase mos"/>
    <property type="match status" value="1"/>
</dbReference>
<dbReference type="Gene3D" id="3.30.200.20">
    <property type="entry name" value="Phosphorylase Kinase, domain 1"/>
    <property type="match status" value="1"/>
</dbReference>
<dbReference type="Gene3D" id="1.10.510.10">
    <property type="entry name" value="Transferase(Phosphotransferase) domain 1"/>
    <property type="match status" value="1"/>
</dbReference>
<dbReference type="InterPro" id="IPR011009">
    <property type="entry name" value="Kinase-like_dom_sf"/>
</dbReference>
<dbReference type="InterPro" id="IPR000719">
    <property type="entry name" value="Prot_kinase_dom"/>
</dbReference>
<dbReference type="InterPro" id="IPR017441">
    <property type="entry name" value="Protein_kinase_ATP_BS"/>
</dbReference>
<dbReference type="InterPro" id="IPR008271">
    <property type="entry name" value="Ser/Thr_kinase_AS"/>
</dbReference>
<dbReference type="InterPro" id="IPR051681">
    <property type="entry name" value="Ser/Thr_Kinases-Pseudokinases"/>
</dbReference>
<dbReference type="PANTHER" id="PTHR44329">
    <property type="entry name" value="SERINE/THREONINE-PROTEIN KINASE TNNI3K-RELATED"/>
    <property type="match status" value="1"/>
</dbReference>
<dbReference type="PANTHER" id="PTHR44329:SF285">
    <property type="entry name" value="V-MOS MOLONEY MURINE SARCOMA VIRAL ONCO HOMOLOG"/>
    <property type="match status" value="1"/>
</dbReference>
<dbReference type="Pfam" id="PF00069">
    <property type="entry name" value="Pkinase"/>
    <property type="match status" value="1"/>
</dbReference>
<dbReference type="SMART" id="SM00220">
    <property type="entry name" value="S_TKc"/>
    <property type="match status" value="1"/>
</dbReference>
<dbReference type="SUPFAM" id="SSF56112">
    <property type="entry name" value="Protein kinase-like (PK-like)"/>
    <property type="match status" value="1"/>
</dbReference>
<dbReference type="PROSITE" id="PS00107">
    <property type="entry name" value="PROTEIN_KINASE_ATP"/>
    <property type="match status" value="1"/>
</dbReference>
<dbReference type="PROSITE" id="PS50011">
    <property type="entry name" value="PROTEIN_KINASE_DOM"/>
    <property type="match status" value="1"/>
</dbReference>
<dbReference type="PROSITE" id="PS00108">
    <property type="entry name" value="PROTEIN_KINASE_ST"/>
    <property type="match status" value="1"/>
</dbReference>
<comment type="catalytic activity">
    <reaction>
        <text>L-seryl-[protein] + ATP = O-phospho-L-seryl-[protein] + ADP + H(+)</text>
        <dbReference type="Rhea" id="RHEA:17989"/>
        <dbReference type="Rhea" id="RHEA-COMP:9863"/>
        <dbReference type="Rhea" id="RHEA-COMP:11604"/>
        <dbReference type="ChEBI" id="CHEBI:15378"/>
        <dbReference type="ChEBI" id="CHEBI:29999"/>
        <dbReference type="ChEBI" id="CHEBI:30616"/>
        <dbReference type="ChEBI" id="CHEBI:83421"/>
        <dbReference type="ChEBI" id="CHEBI:456216"/>
        <dbReference type="EC" id="2.7.11.1"/>
    </reaction>
</comment>
<comment type="catalytic activity">
    <reaction>
        <text>L-threonyl-[protein] + ATP = O-phospho-L-threonyl-[protein] + ADP + H(+)</text>
        <dbReference type="Rhea" id="RHEA:46608"/>
        <dbReference type="Rhea" id="RHEA-COMP:11060"/>
        <dbReference type="Rhea" id="RHEA-COMP:11605"/>
        <dbReference type="ChEBI" id="CHEBI:15378"/>
        <dbReference type="ChEBI" id="CHEBI:30013"/>
        <dbReference type="ChEBI" id="CHEBI:30616"/>
        <dbReference type="ChEBI" id="CHEBI:61977"/>
        <dbReference type="ChEBI" id="CHEBI:456216"/>
        <dbReference type="EC" id="2.7.11.1"/>
    </reaction>
</comment>
<comment type="similarity">
    <text evidence="1">Belongs to the protein kinase superfamily. Ser/Thr protein kinase family.</text>
</comment>
<feature type="chain" id="PRO_0000086349" description="Serine/threonine-protein kinase mos">
    <location>
        <begin position="1" status="less than"/>
        <end position="189" status="greater than"/>
    </location>
</feature>
<feature type="domain" description="Protein kinase" evidence="1">
    <location>
        <begin position="1" status="less than"/>
        <end position="189"/>
    </location>
</feature>
<feature type="active site" description="Proton acceptor" evidence="1 2">
    <location>
        <position position="139"/>
    </location>
</feature>
<feature type="binding site" evidence="1">
    <location>
        <begin position="5"/>
        <end position="13"/>
    </location>
    <ligand>
        <name>ATP</name>
        <dbReference type="ChEBI" id="CHEBI:30616"/>
    </ligand>
</feature>
<feature type="binding site" evidence="1">
    <location>
        <position position="26"/>
    </location>
    <ligand>
        <name>ATP</name>
        <dbReference type="ChEBI" id="CHEBI:30616"/>
    </ligand>
</feature>
<feature type="non-terminal residue">
    <location>
        <position position="1"/>
    </location>
</feature>
<feature type="non-terminal residue">
    <location>
        <position position="189"/>
    </location>
</feature>
<evidence type="ECO:0000255" key="1">
    <source>
        <dbReference type="PROSITE-ProRule" id="PRU00159"/>
    </source>
</evidence>
<evidence type="ECO:0000255" key="2">
    <source>
        <dbReference type="PROSITE-ProRule" id="PRU10027"/>
    </source>
</evidence>
<keyword id="KW-0067">ATP-binding</keyword>
<keyword id="KW-0418">Kinase</keyword>
<keyword id="KW-0547">Nucleotide-binding</keyword>
<keyword id="KW-0723">Serine/threonine-protein kinase</keyword>
<keyword id="KW-0808">Transferase</keyword>
<accession>Q8QHF0</accession>
<reference key="1">
    <citation type="journal article" date="2002" name="Mol. Phylogenet. Evol.">
        <title>Snake phylogeny: evidence from nuclear and mitochondrial genes.</title>
        <authorList>
            <person name="Slowinski J.B."/>
            <person name="Lawson R."/>
        </authorList>
    </citation>
    <scope>NUCLEOTIDE SEQUENCE [GENOMIC DNA]</scope>
    <source>
        <strain>Isolate CAS 201708</strain>
    </source>
</reference>
<organism>
    <name type="scientific">Atheris nitschei</name>
    <name type="common">Great lakes bush viper</name>
    <dbReference type="NCBI Taxonomy" id="110224"/>
    <lineage>
        <taxon>Eukaryota</taxon>
        <taxon>Metazoa</taxon>
        <taxon>Chordata</taxon>
        <taxon>Craniata</taxon>
        <taxon>Vertebrata</taxon>
        <taxon>Euteleostomi</taxon>
        <taxon>Lepidosauria</taxon>
        <taxon>Squamata</taxon>
        <taxon>Bifurcata</taxon>
        <taxon>Unidentata</taxon>
        <taxon>Episquamata</taxon>
        <taxon>Toxicofera</taxon>
        <taxon>Serpentes</taxon>
        <taxon>Colubroidea</taxon>
        <taxon>Viperidae</taxon>
        <taxon>Viperinae</taxon>
        <taxon>Atheris</taxon>
    </lineage>
</organism>